<gene>
    <name type="ordered locus">Os03g0196400</name>
    <name type="ordered locus">LOC_Os03g10030</name>
    <name type="ORF">OsJ_09768</name>
</gene>
<accession>Q10QH3</accession>
<accession>B9F5P6</accession>
<dbReference type="EMBL" id="DP000009">
    <property type="protein sequence ID" value="ABF94455.1"/>
    <property type="molecule type" value="Genomic_DNA"/>
</dbReference>
<dbReference type="EMBL" id="AP008209">
    <property type="status" value="NOT_ANNOTATED_CDS"/>
    <property type="molecule type" value="Genomic_DNA"/>
</dbReference>
<dbReference type="EMBL" id="AP014959">
    <property type="status" value="NOT_ANNOTATED_CDS"/>
    <property type="molecule type" value="Genomic_DNA"/>
</dbReference>
<dbReference type="EMBL" id="CM000140">
    <property type="protein sequence ID" value="EEE58500.1"/>
    <property type="molecule type" value="Genomic_DNA"/>
</dbReference>
<dbReference type="PaxDb" id="39947-Q10QH3"/>
<dbReference type="HOGENOM" id="CLU_066104_0_1_1"/>
<dbReference type="InParanoid" id="Q10QH3"/>
<dbReference type="Proteomes" id="UP000000763">
    <property type="component" value="Chromosome 3"/>
</dbReference>
<dbReference type="Proteomes" id="UP000007752">
    <property type="component" value="Chromosome 3"/>
</dbReference>
<dbReference type="Proteomes" id="UP000059680">
    <property type="component" value="Chromosome 3"/>
</dbReference>
<dbReference type="GO" id="GO:0005886">
    <property type="term" value="C:plasma membrane"/>
    <property type="evidence" value="ECO:0007669"/>
    <property type="project" value="UniProtKB-SubCell"/>
</dbReference>
<dbReference type="InterPro" id="IPR006459">
    <property type="entry name" value="CASP/CASPL"/>
</dbReference>
<dbReference type="InterPro" id="IPR006702">
    <property type="entry name" value="CASP_dom"/>
</dbReference>
<dbReference type="InterPro" id="IPR044173">
    <property type="entry name" value="CASPL"/>
</dbReference>
<dbReference type="NCBIfam" id="TIGR01569">
    <property type="entry name" value="A_tha_TIGR01569"/>
    <property type="match status" value="2"/>
</dbReference>
<dbReference type="PANTHER" id="PTHR36488">
    <property type="entry name" value="CASP-LIKE PROTEIN 1U1"/>
    <property type="match status" value="1"/>
</dbReference>
<dbReference type="PANTHER" id="PTHR36488:SF8">
    <property type="entry name" value="CASP-LIKE PROTEIN 1U1"/>
    <property type="match status" value="1"/>
</dbReference>
<dbReference type="Pfam" id="PF04535">
    <property type="entry name" value="CASP_dom"/>
    <property type="match status" value="1"/>
</dbReference>
<keyword id="KW-0025">Alternative splicing</keyword>
<keyword id="KW-1003">Cell membrane</keyword>
<keyword id="KW-0472">Membrane</keyword>
<keyword id="KW-1185">Reference proteome</keyword>
<keyword id="KW-0812">Transmembrane</keyword>
<keyword id="KW-1133">Transmembrane helix</keyword>
<organism>
    <name type="scientific">Oryza sativa subsp. japonica</name>
    <name type="common">Rice</name>
    <dbReference type="NCBI Taxonomy" id="39947"/>
    <lineage>
        <taxon>Eukaryota</taxon>
        <taxon>Viridiplantae</taxon>
        <taxon>Streptophyta</taxon>
        <taxon>Embryophyta</taxon>
        <taxon>Tracheophyta</taxon>
        <taxon>Spermatophyta</taxon>
        <taxon>Magnoliopsida</taxon>
        <taxon>Liliopsida</taxon>
        <taxon>Poales</taxon>
        <taxon>Poaceae</taxon>
        <taxon>BOP clade</taxon>
        <taxon>Oryzoideae</taxon>
        <taxon>Oryzeae</taxon>
        <taxon>Oryzinae</taxon>
        <taxon>Oryza</taxon>
        <taxon>Oryza sativa</taxon>
    </lineage>
</organism>
<sequence length="195" mass="20314">MRQQQAGGVGDGVSPGNVPVCYYGPGGRVPSSLERRARAAEVLLRCAACGLAVLAAALLGADRQTRVFFSIQKVARYTDMQSLVLLVIANGMAACYSLIQCARCLVMAYIVISAVAAAMEAALIGKYGQPEFQWMKTCHLYKRFCAQAGGGVACAIAASVNMVGVALISAFNLFRLYGNSNGGGKATTTTMAGGK</sequence>
<feature type="chain" id="PRO_0000391598" description="CASP-like protein Os03g0196400">
    <location>
        <begin position="1"/>
        <end position="195"/>
    </location>
</feature>
<feature type="topological domain" description="Cytoplasmic" evidence="2">
    <location>
        <begin position="1"/>
        <end position="38"/>
    </location>
</feature>
<feature type="transmembrane region" description="Helical" evidence="2">
    <location>
        <begin position="39"/>
        <end position="59"/>
    </location>
</feature>
<feature type="topological domain" description="Extracellular" evidence="2">
    <location>
        <begin position="60"/>
        <end position="81"/>
    </location>
</feature>
<feature type="transmembrane region" description="Helical" evidence="2">
    <location>
        <begin position="82"/>
        <end position="102"/>
    </location>
</feature>
<feature type="topological domain" description="Cytoplasmic" evidence="2">
    <location>
        <begin position="103"/>
        <end position="104"/>
    </location>
</feature>
<feature type="transmembrane region" description="Helical" evidence="2">
    <location>
        <begin position="105"/>
        <end position="125"/>
    </location>
</feature>
<feature type="topological domain" description="Extracellular" evidence="2">
    <location>
        <begin position="126"/>
        <end position="150"/>
    </location>
</feature>
<feature type="transmembrane region" description="Helical" evidence="2">
    <location>
        <begin position="151"/>
        <end position="171"/>
    </location>
</feature>
<feature type="topological domain" description="Cytoplasmic" evidence="2">
    <location>
        <begin position="172"/>
        <end position="195"/>
    </location>
</feature>
<feature type="splice variant" id="VSP_041637" description="In isoform 2." evidence="3">
    <original>V</original>
    <variation>VVNNGPSMQKYRGVFDGPKTSFYRKFLLRYFAYCDKIILLDIRR</variation>
    <location>
        <position position="84"/>
    </location>
</feature>
<reference key="1">
    <citation type="journal article" date="2005" name="Genome Res.">
        <title>Sequence, annotation, and analysis of synteny between rice chromosome 3 and diverged grass species.</title>
        <authorList>
            <consortium name="The rice chromosome 3 sequencing consortium"/>
            <person name="Buell C.R."/>
            <person name="Yuan Q."/>
            <person name="Ouyang S."/>
            <person name="Liu J."/>
            <person name="Zhu W."/>
            <person name="Wang A."/>
            <person name="Maiti R."/>
            <person name="Haas B."/>
            <person name="Wortman J."/>
            <person name="Pertea M."/>
            <person name="Jones K.M."/>
            <person name="Kim M."/>
            <person name="Overton L."/>
            <person name="Tsitrin T."/>
            <person name="Fadrosh D."/>
            <person name="Bera J."/>
            <person name="Weaver B."/>
            <person name="Jin S."/>
            <person name="Johri S."/>
            <person name="Reardon M."/>
            <person name="Webb K."/>
            <person name="Hill J."/>
            <person name="Moffat K."/>
            <person name="Tallon L."/>
            <person name="Van Aken S."/>
            <person name="Lewis M."/>
            <person name="Utterback T."/>
            <person name="Feldblyum T."/>
            <person name="Zismann V."/>
            <person name="Iobst S."/>
            <person name="Hsiao J."/>
            <person name="de Vazeille A.R."/>
            <person name="Salzberg S.L."/>
            <person name="White O."/>
            <person name="Fraser C.M."/>
            <person name="Yu Y."/>
            <person name="Kim H."/>
            <person name="Rambo T."/>
            <person name="Currie J."/>
            <person name="Collura K."/>
            <person name="Kernodle-Thompson S."/>
            <person name="Wei F."/>
            <person name="Kudrna K."/>
            <person name="Ammiraju J.S.S."/>
            <person name="Luo M."/>
            <person name="Goicoechea J.L."/>
            <person name="Wing R.A."/>
            <person name="Henry D."/>
            <person name="Oates R."/>
            <person name="Palmer M."/>
            <person name="Pries G."/>
            <person name="Saski C."/>
            <person name="Simmons J."/>
            <person name="Soderlund C."/>
            <person name="Nelson W."/>
            <person name="de la Bastide M."/>
            <person name="Spiegel L."/>
            <person name="Nascimento L."/>
            <person name="Huang E."/>
            <person name="Preston R."/>
            <person name="Zutavern T."/>
            <person name="Palmer L."/>
            <person name="O'Shaughnessy A."/>
            <person name="Dike S."/>
            <person name="McCombie W.R."/>
            <person name="Minx P."/>
            <person name="Cordum H."/>
            <person name="Wilson R."/>
            <person name="Jin W."/>
            <person name="Lee H.R."/>
            <person name="Jiang J."/>
            <person name="Jackson S."/>
        </authorList>
    </citation>
    <scope>NUCLEOTIDE SEQUENCE [LARGE SCALE GENOMIC DNA]</scope>
    <source>
        <strain>cv. Nipponbare</strain>
    </source>
</reference>
<reference key="2">
    <citation type="journal article" date="2005" name="Nature">
        <title>The map-based sequence of the rice genome.</title>
        <authorList>
            <consortium name="International rice genome sequencing project (IRGSP)"/>
        </authorList>
    </citation>
    <scope>NUCLEOTIDE SEQUENCE [LARGE SCALE GENOMIC DNA]</scope>
    <source>
        <strain>cv. Nipponbare</strain>
    </source>
</reference>
<reference key="3">
    <citation type="journal article" date="2008" name="Nucleic Acids Res.">
        <title>The rice annotation project database (RAP-DB): 2008 update.</title>
        <authorList>
            <consortium name="The rice annotation project (RAP)"/>
        </authorList>
    </citation>
    <scope>GENOME REANNOTATION</scope>
    <source>
        <strain>cv. Nipponbare</strain>
    </source>
</reference>
<reference key="4">
    <citation type="journal article" date="2013" name="Rice">
        <title>Improvement of the Oryza sativa Nipponbare reference genome using next generation sequence and optical map data.</title>
        <authorList>
            <person name="Kawahara Y."/>
            <person name="de la Bastide M."/>
            <person name="Hamilton J.P."/>
            <person name="Kanamori H."/>
            <person name="McCombie W.R."/>
            <person name="Ouyang S."/>
            <person name="Schwartz D.C."/>
            <person name="Tanaka T."/>
            <person name="Wu J."/>
            <person name="Zhou S."/>
            <person name="Childs K.L."/>
            <person name="Davidson R.M."/>
            <person name="Lin H."/>
            <person name="Quesada-Ocampo L."/>
            <person name="Vaillancourt B."/>
            <person name="Sakai H."/>
            <person name="Lee S.S."/>
            <person name="Kim J."/>
            <person name="Numa H."/>
            <person name="Itoh T."/>
            <person name="Buell C.R."/>
            <person name="Matsumoto T."/>
        </authorList>
    </citation>
    <scope>GENOME REANNOTATION</scope>
    <source>
        <strain>cv. Nipponbare</strain>
    </source>
</reference>
<reference key="5">
    <citation type="journal article" date="2005" name="PLoS Biol.">
        <title>The genomes of Oryza sativa: a history of duplications.</title>
        <authorList>
            <person name="Yu J."/>
            <person name="Wang J."/>
            <person name="Lin W."/>
            <person name="Li S."/>
            <person name="Li H."/>
            <person name="Zhou J."/>
            <person name="Ni P."/>
            <person name="Dong W."/>
            <person name="Hu S."/>
            <person name="Zeng C."/>
            <person name="Zhang J."/>
            <person name="Zhang Y."/>
            <person name="Li R."/>
            <person name="Xu Z."/>
            <person name="Li S."/>
            <person name="Li X."/>
            <person name="Zheng H."/>
            <person name="Cong L."/>
            <person name="Lin L."/>
            <person name="Yin J."/>
            <person name="Geng J."/>
            <person name="Li G."/>
            <person name="Shi J."/>
            <person name="Liu J."/>
            <person name="Lv H."/>
            <person name="Li J."/>
            <person name="Wang J."/>
            <person name="Deng Y."/>
            <person name="Ran L."/>
            <person name="Shi X."/>
            <person name="Wang X."/>
            <person name="Wu Q."/>
            <person name="Li C."/>
            <person name="Ren X."/>
            <person name="Wang J."/>
            <person name="Wang X."/>
            <person name="Li D."/>
            <person name="Liu D."/>
            <person name="Zhang X."/>
            <person name="Ji Z."/>
            <person name="Zhao W."/>
            <person name="Sun Y."/>
            <person name="Zhang Z."/>
            <person name="Bao J."/>
            <person name="Han Y."/>
            <person name="Dong L."/>
            <person name="Ji J."/>
            <person name="Chen P."/>
            <person name="Wu S."/>
            <person name="Liu J."/>
            <person name="Xiao Y."/>
            <person name="Bu D."/>
            <person name="Tan J."/>
            <person name="Yang L."/>
            <person name="Ye C."/>
            <person name="Zhang J."/>
            <person name="Xu J."/>
            <person name="Zhou Y."/>
            <person name="Yu Y."/>
            <person name="Zhang B."/>
            <person name="Zhuang S."/>
            <person name="Wei H."/>
            <person name="Liu B."/>
            <person name="Lei M."/>
            <person name="Yu H."/>
            <person name="Li Y."/>
            <person name="Xu H."/>
            <person name="Wei S."/>
            <person name="He X."/>
            <person name="Fang L."/>
            <person name="Zhang Z."/>
            <person name="Zhang Y."/>
            <person name="Huang X."/>
            <person name="Su Z."/>
            <person name="Tong W."/>
            <person name="Li J."/>
            <person name="Tong Z."/>
            <person name="Li S."/>
            <person name="Ye J."/>
            <person name="Wang L."/>
            <person name="Fang L."/>
            <person name="Lei T."/>
            <person name="Chen C.-S."/>
            <person name="Chen H.-C."/>
            <person name="Xu Z."/>
            <person name="Li H."/>
            <person name="Huang H."/>
            <person name="Zhang F."/>
            <person name="Xu H."/>
            <person name="Li N."/>
            <person name="Zhao C."/>
            <person name="Li S."/>
            <person name="Dong L."/>
            <person name="Huang Y."/>
            <person name="Li L."/>
            <person name="Xi Y."/>
            <person name="Qi Q."/>
            <person name="Li W."/>
            <person name="Zhang B."/>
            <person name="Hu W."/>
            <person name="Zhang Y."/>
            <person name="Tian X."/>
            <person name="Jiao Y."/>
            <person name="Liang X."/>
            <person name="Jin J."/>
            <person name="Gao L."/>
            <person name="Zheng W."/>
            <person name="Hao B."/>
            <person name="Liu S.-M."/>
            <person name="Wang W."/>
            <person name="Yuan L."/>
            <person name="Cao M."/>
            <person name="McDermott J."/>
            <person name="Samudrala R."/>
            <person name="Wang J."/>
            <person name="Wong G.K.-S."/>
            <person name="Yang H."/>
        </authorList>
    </citation>
    <scope>NUCLEOTIDE SEQUENCE [LARGE SCALE GENOMIC DNA]</scope>
    <source>
        <strain>cv. Nipponbare</strain>
    </source>
</reference>
<comment type="subunit">
    <text evidence="1">Homodimer and heterodimers.</text>
</comment>
<comment type="subcellular location">
    <subcellularLocation>
        <location evidence="1">Cell membrane</location>
        <topology evidence="1">Multi-pass membrane protein</topology>
    </subcellularLocation>
</comment>
<comment type="alternative products">
    <event type="alternative splicing"/>
    <isoform>
        <id>Q10QH3-1</id>
        <name>1</name>
        <sequence type="displayed"/>
    </isoform>
    <isoform>
        <id>Q10QH3-2</id>
        <name>2</name>
        <sequence type="described" ref="VSP_041637"/>
    </isoform>
</comment>
<comment type="similarity">
    <text evidence="3">Belongs to the Casparian strip membrane proteins (CASP) family.</text>
</comment>
<name>CSPLL_ORYSJ</name>
<proteinExistence type="inferred from homology"/>
<evidence type="ECO:0000250" key="1"/>
<evidence type="ECO:0000255" key="2"/>
<evidence type="ECO:0000305" key="3"/>
<protein>
    <recommendedName>
        <fullName>CASP-like protein Os03g0196400</fullName>
    </recommendedName>
</protein>